<protein>
    <recommendedName>
        <fullName evidence="1">Putative transport protein NTHI0043</fullName>
    </recommendedName>
</protein>
<feature type="chain" id="PRO_0000226891" description="Putative transport protein NTHI0043">
    <location>
        <begin position="1"/>
        <end position="551"/>
    </location>
</feature>
<feature type="transmembrane region" description="Helical" evidence="1">
    <location>
        <begin position="4"/>
        <end position="24"/>
    </location>
</feature>
<feature type="transmembrane region" description="Helical" evidence="1">
    <location>
        <begin position="28"/>
        <end position="48"/>
    </location>
</feature>
<feature type="transmembrane region" description="Helical" evidence="1">
    <location>
        <begin position="65"/>
        <end position="85"/>
    </location>
</feature>
<feature type="transmembrane region" description="Helical" evidence="1">
    <location>
        <begin position="95"/>
        <end position="115"/>
    </location>
</feature>
<feature type="transmembrane region" description="Helical" evidence="1">
    <location>
        <begin position="157"/>
        <end position="177"/>
    </location>
</feature>
<feature type="transmembrane region" description="Helical" evidence="1">
    <location>
        <begin position="370"/>
        <end position="390"/>
    </location>
</feature>
<feature type="transmembrane region" description="Helical" evidence="1">
    <location>
        <begin position="402"/>
        <end position="424"/>
    </location>
</feature>
<feature type="transmembrane region" description="Helical" evidence="1">
    <location>
        <begin position="438"/>
        <end position="458"/>
    </location>
</feature>
<feature type="transmembrane region" description="Helical" evidence="1">
    <location>
        <begin position="463"/>
        <end position="483"/>
    </location>
</feature>
<feature type="transmembrane region" description="Helical" evidence="1">
    <location>
        <begin position="492"/>
        <end position="512"/>
    </location>
</feature>
<feature type="transmembrane region" description="Helical" evidence="1">
    <location>
        <begin position="529"/>
        <end position="549"/>
    </location>
</feature>
<feature type="domain" description="RCK C-terminal 1" evidence="1">
    <location>
        <begin position="191"/>
        <end position="275"/>
    </location>
</feature>
<feature type="domain" description="RCK C-terminal 2" evidence="1">
    <location>
        <begin position="277"/>
        <end position="360"/>
    </location>
</feature>
<gene>
    <name type="ordered locus">NTHI0043</name>
</gene>
<accession>Q4QPK9</accession>
<sequence length="551" mass="59098">MSDIAITISLLALVAVIGLWIGHWKIRGVGLGIGGVLFGGIIVAHFTNQYGLKLDAHTLHFVQEFGLILFVYTIGIQVGPGFFSSLRKSGLKLNAFAILIIVLGSIAVVLVHKIADVPLDIALGIYSGAVTNTPALGAGQQILAELGVPQTTVTMGVSYAMAYPFGICGILLAMWLIRLFFKVKVDDEAARFNAESSQDKESLHNISLKVTNQNLDGLTLIQIPGFSDEEVVCSRLKRDDMEIVPKASTEIRINDILQLVGDDNSLAKMRLIIGYEVDAPTVAYSGEIRSERVVVTNEKVLGKKIRALGIHQKYGVVISRLNRAGIELVPTGNTTLQFGDVLHMVGRSDVLNQAISVIGNAQQKLLQVQMLPVFIGIGLGVLVGSIPFYIPGFPVALKLGLAGGPLVVALILARIGTIGKLYWFMPPSANLALREIGIVLFLAVVGLKSGGSFFDTLVNGSGLEWMGYGIFITFIPLMITGILARLYGKLNYLTICGLLAGSMTDPPALAFANEIKEDNGAAALSYATVYPLVMFLRIMSPQLLAVLLWAA</sequence>
<reference key="1">
    <citation type="journal article" date="2005" name="J. Bacteriol.">
        <title>Genomic sequence of an otitis media isolate of nontypeable Haemophilus influenzae: comparative study with H. influenzae serotype d, strain KW20.</title>
        <authorList>
            <person name="Harrison A."/>
            <person name="Dyer D.W."/>
            <person name="Gillaspy A."/>
            <person name="Ray W.C."/>
            <person name="Mungur R."/>
            <person name="Carson M.B."/>
            <person name="Zhong H."/>
            <person name="Gipson J."/>
            <person name="Gipson M."/>
            <person name="Johnson L.S."/>
            <person name="Lewis L."/>
            <person name="Bakaletz L.O."/>
            <person name="Munson R.S. Jr."/>
        </authorList>
    </citation>
    <scope>NUCLEOTIDE SEQUENCE [LARGE SCALE GENOMIC DNA]</scope>
    <source>
        <strain>86-028NP</strain>
    </source>
</reference>
<dbReference type="EMBL" id="CP000057">
    <property type="protein sequence ID" value="AAX87038.1"/>
    <property type="molecule type" value="Genomic_DNA"/>
</dbReference>
<dbReference type="RefSeq" id="WP_011271789.1">
    <property type="nucleotide sequence ID" value="NC_007146.2"/>
</dbReference>
<dbReference type="SMR" id="Q4QPK9"/>
<dbReference type="GeneID" id="93220791"/>
<dbReference type="KEGG" id="hit:NTHI0043"/>
<dbReference type="HOGENOM" id="CLU_035023_3_1_6"/>
<dbReference type="Proteomes" id="UP000002525">
    <property type="component" value="Chromosome"/>
</dbReference>
<dbReference type="GO" id="GO:0005886">
    <property type="term" value="C:plasma membrane"/>
    <property type="evidence" value="ECO:0007669"/>
    <property type="project" value="UniProtKB-SubCell"/>
</dbReference>
<dbReference type="GO" id="GO:0008324">
    <property type="term" value="F:monoatomic cation transmembrane transporter activity"/>
    <property type="evidence" value="ECO:0007669"/>
    <property type="project" value="InterPro"/>
</dbReference>
<dbReference type="GO" id="GO:0006813">
    <property type="term" value="P:potassium ion transport"/>
    <property type="evidence" value="ECO:0007669"/>
    <property type="project" value="InterPro"/>
</dbReference>
<dbReference type="Gene3D" id="3.30.70.1450">
    <property type="entry name" value="Regulator of K+ conductance, C-terminal domain"/>
    <property type="match status" value="2"/>
</dbReference>
<dbReference type="HAMAP" id="MF_01016">
    <property type="entry name" value="YidE"/>
    <property type="match status" value="1"/>
</dbReference>
<dbReference type="InterPro" id="IPR050144">
    <property type="entry name" value="AAE_transporter"/>
</dbReference>
<dbReference type="InterPro" id="IPR006037">
    <property type="entry name" value="RCK_C"/>
</dbReference>
<dbReference type="InterPro" id="IPR036721">
    <property type="entry name" value="RCK_C_sf"/>
</dbReference>
<dbReference type="InterPro" id="IPR023018">
    <property type="entry name" value="Transpt_YidE_put"/>
</dbReference>
<dbReference type="InterPro" id="IPR006512">
    <property type="entry name" value="YidE_YbjL"/>
</dbReference>
<dbReference type="NCBIfam" id="NF003007">
    <property type="entry name" value="PRK03818.1"/>
    <property type="match status" value="1"/>
</dbReference>
<dbReference type="NCBIfam" id="TIGR01625">
    <property type="entry name" value="YidE_YbjL_dupl"/>
    <property type="match status" value="2"/>
</dbReference>
<dbReference type="PANTHER" id="PTHR30445">
    <property type="entry name" value="K(+)_H(+) ANTIPORTER SUBUNIT KHTT"/>
    <property type="match status" value="1"/>
</dbReference>
<dbReference type="PANTHER" id="PTHR30445:SF3">
    <property type="entry name" value="TRANSPORT PROTEIN YIDE-RELATED"/>
    <property type="match status" value="1"/>
</dbReference>
<dbReference type="Pfam" id="PF06826">
    <property type="entry name" value="Asp-Al_Ex"/>
    <property type="match status" value="2"/>
</dbReference>
<dbReference type="Pfam" id="PF02080">
    <property type="entry name" value="TrkA_C"/>
    <property type="match status" value="1"/>
</dbReference>
<dbReference type="SUPFAM" id="SSF116726">
    <property type="entry name" value="TrkA C-terminal domain-like"/>
    <property type="match status" value="2"/>
</dbReference>
<dbReference type="PROSITE" id="PS51202">
    <property type="entry name" value="RCK_C"/>
    <property type="match status" value="2"/>
</dbReference>
<proteinExistence type="inferred from homology"/>
<organism>
    <name type="scientific">Haemophilus influenzae (strain 86-028NP)</name>
    <dbReference type="NCBI Taxonomy" id="281310"/>
    <lineage>
        <taxon>Bacteria</taxon>
        <taxon>Pseudomonadati</taxon>
        <taxon>Pseudomonadota</taxon>
        <taxon>Gammaproteobacteria</taxon>
        <taxon>Pasteurellales</taxon>
        <taxon>Pasteurellaceae</taxon>
        <taxon>Haemophilus</taxon>
    </lineage>
</organism>
<comment type="subcellular location">
    <subcellularLocation>
        <location evidence="1">Cell membrane</location>
        <topology evidence="1">Multi-pass membrane protein</topology>
    </subcellularLocation>
</comment>
<comment type="similarity">
    <text evidence="1">Belongs to the AAE transporter (TC 2.A.81) family. YidE subfamily.</text>
</comment>
<name>Y043_HAEI8</name>
<evidence type="ECO:0000255" key="1">
    <source>
        <dbReference type="HAMAP-Rule" id="MF_01016"/>
    </source>
</evidence>
<keyword id="KW-1003">Cell membrane</keyword>
<keyword id="KW-0472">Membrane</keyword>
<keyword id="KW-0677">Repeat</keyword>
<keyword id="KW-0812">Transmembrane</keyword>
<keyword id="KW-1133">Transmembrane helix</keyword>
<keyword id="KW-0813">Transport</keyword>